<organism>
    <name type="scientific">Vibrio parahaemolyticus serotype O3:K6 (strain RIMD 2210633)</name>
    <dbReference type="NCBI Taxonomy" id="223926"/>
    <lineage>
        <taxon>Bacteria</taxon>
        <taxon>Pseudomonadati</taxon>
        <taxon>Pseudomonadota</taxon>
        <taxon>Gammaproteobacteria</taxon>
        <taxon>Vibrionales</taxon>
        <taxon>Vibrionaceae</taxon>
        <taxon>Vibrio</taxon>
    </lineage>
</organism>
<protein>
    <recommendedName>
        <fullName>Putative 4-hydroxy-4-methyl-2-oxoglutarate aldolase</fullName>
        <shortName>HMG aldolase</shortName>
        <ecNumber>4.1.3.17</ecNumber>
    </recommendedName>
    <alternativeName>
        <fullName>Oxaloacetate decarboxylase</fullName>
        <shortName>OAA decarboxylase</shortName>
        <ecNumber>4.1.1.112</ecNumber>
    </alternativeName>
    <alternativeName>
        <fullName>Regulator of ribonuclease activity homolog</fullName>
    </alternativeName>
    <alternativeName>
        <fullName>RraA-like protein</fullName>
    </alternativeName>
</protein>
<feature type="chain" id="PRO_0000209642" description="Putative 4-hydroxy-4-methyl-2-oxoglutarate aldolase">
    <location>
        <begin position="1"/>
        <end position="160"/>
    </location>
</feature>
<feature type="binding site" evidence="1">
    <location>
        <begin position="75"/>
        <end position="78"/>
    </location>
    <ligand>
        <name>substrate</name>
    </ligand>
</feature>
<feature type="binding site" evidence="1">
    <location>
        <position position="97"/>
    </location>
    <ligand>
        <name>substrate</name>
    </ligand>
</feature>
<feature type="binding site" evidence="1">
    <location>
        <position position="98"/>
    </location>
    <ligand>
        <name>a divalent metal cation</name>
        <dbReference type="ChEBI" id="CHEBI:60240"/>
    </ligand>
</feature>
<keyword id="KW-0456">Lyase</keyword>
<keyword id="KW-0479">Metal-binding</keyword>
<name>RRAAH_VIBPA</name>
<proteinExistence type="inferred from homology"/>
<accession>Q87SD2</accession>
<gene>
    <name type="ordered locus">VP0492</name>
</gene>
<evidence type="ECO:0000250" key="1"/>
<evidence type="ECO:0000305" key="2"/>
<comment type="function">
    <text evidence="1">Catalyzes the aldol cleavage of 4-hydroxy-4-methyl-2-oxoglutarate (HMG) into 2 molecules of pyruvate. Also contains a secondary oxaloacetate (OAA) decarboxylase activity due to the common pyruvate enolate transition state formed following C-C bond cleavage in the retro-aldol and decarboxylation reactions (By similarity).</text>
</comment>
<comment type="catalytic activity">
    <reaction>
        <text>4-hydroxy-4-methyl-2-oxoglutarate = 2 pyruvate</text>
        <dbReference type="Rhea" id="RHEA:22748"/>
        <dbReference type="ChEBI" id="CHEBI:15361"/>
        <dbReference type="ChEBI" id="CHEBI:58276"/>
        <dbReference type="EC" id="4.1.3.17"/>
    </reaction>
</comment>
<comment type="catalytic activity">
    <reaction>
        <text>oxaloacetate + H(+) = pyruvate + CO2</text>
        <dbReference type="Rhea" id="RHEA:15641"/>
        <dbReference type="ChEBI" id="CHEBI:15361"/>
        <dbReference type="ChEBI" id="CHEBI:15378"/>
        <dbReference type="ChEBI" id="CHEBI:16452"/>
        <dbReference type="ChEBI" id="CHEBI:16526"/>
        <dbReference type="EC" id="4.1.1.112"/>
    </reaction>
</comment>
<comment type="cofactor">
    <cofactor evidence="1">
        <name>a divalent metal cation</name>
        <dbReference type="ChEBI" id="CHEBI:60240"/>
    </cofactor>
    <text evidence="1">Divalent metal cation.</text>
</comment>
<comment type="subunit">
    <text evidence="1">Homotrimer.</text>
</comment>
<comment type="similarity">
    <text evidence="2">Belongs to the class II aldolase/RraA-like family.</text>
</comment>
<sequence length="160" mass="17708">MRDITPDICDQFEDQVTLLNLPLQNFGQRTAFHGEIVTVRCYHDNSKVREVLEQDGTGKVLIVDGHGSCQKALLGDQLAILGIENGWEGIIVYGAVRDVAQMSQMDIGVQALGTCPFKTEKRGVGEVNVTLTMLNQIVQPKHHVYADWNGVLISKEALDF</sequence>
<reference key="1">
    <citation type="journal article" date="2003" name="Lancet">
        <title>Genome sequence of Vibrio parahaemolyticus: a pathogenic mechanism distinct from that of V. cholerae.</title>
        <authorList>
            <person name="Makino K."/>
            <person name="Oshima K."/>
            <person name="Kurokawa K."/>
            <person name="Yokoyama K."/>
            <person name="Uda T."/>
            <person name="Tagomori K."/>
            <person name="Iijima Y."/>
            <person name="Najima M."/>
            <person name="Nakano M."/>
            <person name="Yamashita A."/>
            <person name="Kubota Y."/>
            <person name="Kimura S."/>
            <person name="Yasunaga T."/>
            <person name="Honda T."/>
            <person name="Shinagawa H."/>
            <person name="Hattori M."/>
            <person name="Iida T."/>
        </authorList>
    </citation>
    <scope>NUCLEOTIDE SEQUENCE [LARGE SCALE GENOMIC DNA]</scope>
    <source>
        <strain>RIMD 2210633</strain>
    </source>
</reference>
<dbReference type="EC" id="4.1.3.17"/>
<dbReference type="EC" id="4.1.1.112"/>
<dbReference type="EMBL" id="BA000031">
    <property type="protein sequence ID" value="BAC58755.1"/>
    <property type="molecule type" value="Genomic_DNA"/>
</dbReference>
<dbReference type="RefSeq" id="NP_796871.1">
    <property type="nucleotide sequence ID" value="NC_004603.1"/>
</dbReference>
<dbReference type="RefSeq" id="WP_005460676.1">
    <property type="nucleotide sequence ID" value="NC_004603.1"/>
</dbReference>
<dbReference type="SMR" id="Q87SD2"/>
<dbReference type="GeneID" id="1187960"/>
<dbReference type="KEGG" id="vpa:VP0492"/>
<dbReference type="PATRIC" id="fig|223926.6.peg.468"/>
<dbReference type="eggNOG" id="COG0684">
    <property type="taxonomic scope" value="Bacteria"/>
</dbReference>
<dbReference type="HOGENOM" id="CLU_072626_4_0_6"/>
<dbReference type="Proteomes" id="UP000002493">
    <property type="component" value="Chromosome 1"/>
</dbReference>
<dbReference type="GO" id="GO:0047443">
    <property type="term" value="F:4-hydroxy-4-methyl-2-oxoglutarate aldolase activity"/>
    <property type="evidence" value="ECO:0007669"/>
    <property type="project" value="UniProtKB-EC"/>
</dbReference>
<dbReference type="GO" id="GO:0046872">
    <property type="term" value="F:metal ion binding"/>
    <property type="evidence" value="ECO:0007669"/>
    <property type="project" value="UniProtKB-KW"/>
</dbReference>
<dbReference type="GO" id="GO:0008948">
    <property type="term" value="F:oxaloacetate decarboxylase activity"/>
    <property type="evidence" value="ECO:0007669"/>
    <property type="project" value="UniProtKB-EC"/>
</dbReference>
<dbReference type="GO" id="GO:0008428">
    <property type="term" value="F:ribonuclease inhibitor activity"/>
    <property type="evidence" value="ECO:0007669"/>
    <property type="project" value="InterPro"/>
</dbReference>
<dbReference type="GO" id="GO:0051252">
    <property type="term" value="P:regulation of RNA metabolic process"/>
    <property type="evidence" value="ECO:0007669"/>
    <property type="project" value="InterPro"/>
</dbReference>
<dbReference type="CDD" id="cd16841">
    <property type="entry name" value="RraA_family"/>
    <property type="match status" value="1"/>
</dbReference>
<dbReference type="Gene3D" id="3.50.30.40">
    <property type="entry name" value="Ribonuclease E inhibitor RraA/RraA-like"/>
    <property type="match status" value="1"/>
</dbReference>
<dbReference type="InterPro" id="IPR010203">
    <property type="entry name" value="RraA"/>
</dbReference>
<dbReference type="InterPro" id="IPR005493">
    <property type="entry name" value="RraA/RraA-like"/>
</dbReference>
<dbReference type="InterPro" id="IPR036704">
    <property type="entry name" value="RraA/RraA-like_sf"/>
</dbReference>
<dbReference type="NCBIfam" id="TIGR01935">
    <property type="entry name" value="NOT-MenG"/>
    <property type="match status" value="1"/>
</dbReference>
<dbReference type="NCBIfam" id="NF006875">
    <property type="entry name" value="PRK09372.1"/>
    <property type="match status" value="1"/>
</dbReference>
<dbReference type="NCBIfam" id="NF009134">
    <property type="entry name" value="PRK12487.1"/>
    <property type="match status" value="1"/>
</dbReference>
<dbReference type="PANTHER" id="PTHR33254">
    <property type="entry name" value="4-HYDROXY-4-METHYL-2-OXOGLUTARATE ALDOLASE 3-RELATED"/>
    <property type="match status" value="1"/>
</dbReference>
<dbReference type="PANTHER" id="PTHR33254:SF4">
    <property type="entry name" value="4-HYDROXY-4-METHYL-2-OXOGLUTARATE ALDOLASE 3-RELATED"/>
    <property type="match status" value="1"/>
</dbReference>
<dbReference type="Pfam" id="PF03737">
    <property type="entry name" value="RraA-like"/>
    <property type="match status" value="1"/>
</dbReference>
<dbReference type="SUPFAM" id="SSF89562">
    <property type="entry name" value="RraA-like"/>
    <property type="match status" value="1"/>
</dbReference>